<gene>
    <name evidence="1" type="primary">pyrD</name>
    <name type="ordered locus">EC55989_0994</name>
</gene>
<reference key="1">
    <citation type="journal article" date="2009" name="PLoS Genet.">
        <title>Organised genome dynamics in the Escherichia coli species results in highly diverse adaptive paths.</title>
        <authorList>
            <person name="Touchon M."/>
            <person name="Hoede C."/>
            <person name="Tenaillon O."/>
            <person name="Barbe V."/>
            <person name="Baeriswyl S."/>
            <person name="Bidet P."/>
            <person name="Bingen E."/>
            <person name="Bonacorsi S."/>
            <person name="Bouchier C."/>
            <person name="Bouvet O."/>
            <person name="Calteau A."/>
            <person name="Chiapello H."/>
            <person name="Clermont O."/>
            <person name="Cruveiller S."/>
            <person name="Danchin A."/>
            <person name="Diard M."/>
            <person name="Dossat C."/>
            <person name="Karoui M.E."/>
            <person name="Frapy E."/>
            <person name="Garry L."/>
            <person name="Ghigo J.M."/>
            <person name="Gilles A.M."/>
            <person name="Johnson J."/>
            <person name="Le Bouguenec C."/>
            <person name="Lescat M."/>
            <person name="Mangenot S."/>
            <person name="Martinez-Jehanne V."/>
            <person name="Matic I."/>
            <person name="Nassif X."/>
            <person name="Oztas S."/>
            <person name="Petit M.A."/>
            <person name="Pichon C."/>
            <person name="Rouy Z."/>
            <person name="Ruf C.S."/>
            <person name="Schneider D."/>
            <person name="Tourret J."/>
            <person name="Vacherie B."/>
            <person name="Vallenet D."/>
            <person name="Medigue C."/>
            <person name="Rocha E.P.C."/>
            <person name="Denamur E."/>
        </authorList>
    </citation>
    <scope>NUCLEOTIDE SEQUENCE [LARGE SCALE GENOMIC DNA]</scope>
    <source>
        <strain>55989 / EAEC</strain>
    </source>
</reference>
<evidence type="ECO:0000255" key="1">
    <source>
        <dbReference type="HAMAP-Rule" id="MF_00225"/>
    </source>
</evidence>
<keyword id="KW-1003">Cell membrane</keyword>
<keyword id="KW-0285">Flavoprotein</keyword>
<keyword id="KW-0288">FMN</keyword>
<keyword id="KW-0472">Membrane</keyword>
<keyword id="KW-0560">Oxidoreductase</keyword>
<keyword id="KW-0665">Pyrimidine biosynthesis</keyword>
<keyword id="KW-1185">Reference proteome</keyword>
<feature type="chain" id="PRO_1000195069" description="Dihydroorotate dehydrogenase (quinone)">
    <location>
        <begin position="1"/>
        <end position="336"/>
    </location>
</feature>
<feature type="active site" description="Nucleophile" evidence="1">
    <location>
        <position position="175"/>
    </location>
</feature>
<feature type="binding site" evidence="1">
    <location>
        <begin position="62"/>
        <end position="66"/>
    </location>
    <ligand>
        <name>FMN</name>
        <dbReference type="ChEBI" id="CHEBI:58210"/>
    </ligand>
</feature>
<feature type="binding site" evidence="1">
    <location>
        <position position="66"/>
    </location>
    <ligand>
        <name>substrate</name>
    </ligand>
</feature>
<feature type="binding site" evidence="1">
    <location>
        <position position="86"/>
    </location>
    <ligand>
        <name>FMN</name>
        <dbReference type="ChEBI" id="CHEBI:58210"/>
    </ligand>
</feature>
<feature type="binding site" evidence="1">
    <location>
        <begin position="111"/>
        <end position="115"/>
    </location>
    <ligand>
        <name>substrate</name>
    </ligand>
</feature>
<feature type="binding site" evidence="1">
    <location>
        <position position="139"/>
    </location>
    <ligand>
        <name>FMN</name>
        <dbReference type="ChEBI" id="CHEBI:58210"/>
    </ligand>
</feature>
<feature type="binding site" evidence="1">
    <location>
        <position position="172"/>
    </location>
    <ligand>
        <name>FMN</name>
        <dbReference type="ChEBI" id="CHEBI:58210"/>
    </ligand>
</feature>
<feature type="binding site" evidence="1">
    <location>
        <position position="172"/>
    </location>
    <ligand>
        <name>substrate</name>
    </ligand>
</feature>
<feature type="binding site" evidence="1">
    <location>
        <position position="177"/>
    </location>
    <ligand>
        <name>substrate</name>
    </ligand>
</feature>
<feature type="binding site" evidence="1">
    <location>
        <position position="217"/>
    </location>
    <ligand>
        <name>FMN</name>
        <dbReference type="ChEBI" id="CHEBI:58210"/>
    </ligand>
</feature>
<feature type="binding site" evidence="1">
    <location>
        <position position="245"/>
    </location>
    <ligand>
        <name>FMN</name>
        <dbReference type="ChEBI" id="CHEBI:58210"/>
    </ligand>
</feature>
<feature type="binding site" evidence="1">
    <location>
        <begin position="246"/>
        <end position="247"/>
    </location>
    <ligand>
        <name>substrate</name>
    </ligand>
</feature>
<feature type="binding site" evidence="1">
    <location>
        <position position="268"/>
    </location>
    <ligand>
        <name>FMN</name>
        <dbReference type="ChEBI" id="CHEBI:58210"/>
    </ligand>
</feature>
<feature type="binding site" evidence="1">
    <location>
        <position position="297"/>
    </location>
    <ligand>
        <name>FMN</name>
        <dbReference type="ChEBI" id="CHEBI:58210"/>
    </ligand>
</feature>
<feature type="binding site" evidence="1">
    <location>
        <begin position="318"/>
        <end position="319"/>
    </location>
    <ligand>
        <name>FMN</name>
        <dbReference type="ChEBI" id="CHEBI:58210"/>
    </ligand>
</feature>
<dbReference type="EC" id="1.3.5.2" evidence="1"/>
<dbReference type="EMBL" id="CU928145">
    <property type="protein sequence ID" value="CAU96856.1"/>
    <property type="molecule type" value="Genomic_DNA"/>
</dbReference>
<dbReference type="RefSeq" id="WP_001295352.1">
    <property type="nucleotide sequence ID" value="NC_011748.1"/>
</dbReference>
<dbReference type="SMR" id="B7LE45"/>
<dbReference type="GeneID" id="93776469"/>
<dbReference type="KEGG" id="eck:EC55989_0994"/>
<dbReference type="HOGENOM" id="CLU_013640_2_0_6"/>
<dbReference type="UniPathway" id="UPA00070">
    <property type="reaction ID" value="UER00946"/>
</dbReference>
<dbReference type="Proteomes" id="UP000000746">
    <property type="component" value="Chromosome"/>
</dbReference>
<dbReference type="GO" id="GO:0005737">
    <property type="term" value="C:cytoplasm"/>
    <property type="evidence" value="ECO:0007669"/>
    <property type="project" value="InterPro"/>
</dbReference>
<dbReference type="GO" id="GO:0005886">
    <property type="term" value="C:plasma membrane"/>
    <property type="evidence" value="ECO:0007669"/>
    <property type="project" value="UniProtKB-SubCell"/>
</dbReference>
<dbReference type="GO" id="GO:0106430">
    <property type="term" value="F:dihydroorotate dehydrogenase (quinone) activity"/>
    <property type="evidence" value="ECO:0007669"/>
    <property type="project" value="UniProtKB-EC"/>
</dbReference>
<dbReference type="GO" id="GO:0006207">
    <property type="term" value="P:'de novo' pyrimidine nucleobase biosynthetic process"/>
    <property type="evidence" value="ECO:0007669"/>
    <property type="project" value="InterPro"/>
</dbReference>
<dbReference type="GO" id="GO:0044205">
    <property type="term" value="P:'de novo' UMP biosynthetic process"/>
    <property type="evidence" value="ECO:0007669"/>
    <property type="project" value="UniProtKB-UniRule"/>
</dbReference>
<dbReference type="CDD" id="cd04738">
    <property type="entry name" value="DHOD_2_like"/>
    <property type="match status" value="1"/>
</dbReference>
<dbReference type="FunFam" id="3.20.20.70:FF:000028">
    <property type="entry name" value="Dihydroorotate dehydrogenase (quinone)"/>
    <property type="match status" value="1"/>
</dbReference>
<dbReference type="Gene3D" id="3.20.20.70">
    <property type="entry name" value="Aldolase class I"/>
    <property type="match status" value="1"/>
</dbReference>
<dbReference type="HAMAP" id="MF_00225">
    <property type="entry name" value="DHO_dh_type2"/>
    <property type="match status" value="1"/>
</dbReference>
<dbReference type="InterPro" id="IPR013785">
    <property type="entry name" value="Aldolase_TIM"/>
</dbReference>
<dbReference type="InterPro" id="IPR050074">
    <property type="entry name" value="DHO_dehydrogenase"/>
</dbReference>
<dbReference type="InterPro" id="IPR012135">
    <property type="entry name" value="Dihydroorotate_DH_1_2"/>
</dbReference>
<dbReference type="InterPro" id="IPR005719">
    <property type="entry name" value="Dihydroorotate_DH_2"/>
</dbReference>
<dbReference type="InterPro" id="IPR005720">
    <property type="entry name" value="Dihydroorotate_DH_cat"/>
</dbReference>
<dbReference type="InterPro" id="IPR001295">
    <property type="entry name" value="Dihydroorotate_DH_CS"/>
</dbReference>
<dbReference type="NCBIfam" id="NF003644">
    <property type="entry name" value="PRK05286.1-1"/>
    <property type="match status" value="1"/>
</dbReference>
<dbReference type="NCBIfam" id="NF003645">
    <property type="entry name" value="PRK05286.1-2"/>
    <property type="match status" value="1"/>
</dbReference>
<dbReference type="NCBIfam" id="NF003646">
    <property type="entry name" value="PRK05286.1-4"/>
    <property type="match status" value="1"/>
</dbReference>
<dbReference type="NCBIfam" id="NF003652">
    <property type="entry name" value="PRK05286.2-5"/>
    <property type="match status" value="1"/>
</dbReference>
<dbReference type="NCBIfam" id="TIGR01036">
    <property type="entry name" value="pyrD_sub2"/>
    <property type="match status" value="1"/>
</dbReference>
<dbReference type="PANTHER" id="PTHR48109:SF4">
    <property type="entry name" value="DIHYDROOROTATE DEHYDROGENASE (QUINONE), MITOCHONDRIAL"/>
    <property type="match status" value="1"/>
</dbReference>
<dbReference type="PANTHER" id="PTHR48109">
    <property type="entry name" value="DIHYDROOROTATE DEHYDROGENASE (QUINONE), MITOCHONDRIAL-RELATED"/>
    <property type="match status" value="1"/>
</dbReference>
<dbReference type="Pfam" id="PF01180">
    <property type="entry name" value="DHO_dh"/>
    <property type="match status" value="1"/>
</dbReference>
<dbReference type="PIRSF" id="PIRSF000164">
    <property type="entry name" value="DHO_oxidase"/>
    <property type="match status" value="1"/>
</dbReference>
<dbReference type="SUPFAM" id="SSF51395">
    <property type="entry name" value="FMN-linked oxidoreductases"/>
    <property type="match status" value="1"/>
</dbReference>
<dbReference type="PROSITE" id="PS00911">
    <property type="entry name" value="DHODEHASE_1"/>
    <property type="match status" value="1"/>
</dbReference>
<dbReference type="PROSITE" id="PS00912">
    <property type="entry name" value="DHODEHASE_2"/>
    <property type="match status" value="1"/>
</dbReference>
<protein>
    <recommendedName>
        <fullName evidence="1">Dihydroorotate dehydrogenase (quinone)</fullName>
        <ecNumber evidence="1">1.3.5.2</ecNumber>
    </recommendedName>
    <alternativeName>
        <fullName evidence="1">DHOdehase</fullName>
        <shortName evidence="1">DHOD</shortName>
        <shortName evidence="1">DHODase</shortName>
    </alternativeName>
    <alternativeName>
        <fullName evidence="1">Dihydroorotate oxidase</fullName>
    </alternativeName>
</protein>
<proteinExistence type="inferred from homology"/>
<organism>
    <name type="scientific">Escherichia coli (strain 55989 / EAEC)</name>
    <dbReference type="NCBI Taxonomy" id="585055"/>
    <lineage>
        <taxon>Bacteria</taxon>
        <taxon>Pseudomonadati</taxon>
        <taxon>Pseudomonadota</taxon>
        <taxon>Gammaproteobacteria</taxon>
        <taxon>Enterobacterales</taxon>
        <taxon>Enterobacteriaceae</taxon>
        <taxon>Escherichia</taxon>
    </lineage>
</organism>
<accession>B7LE45</accession>
<sequence length="336" mass="36775">MYYPFVRKALFQLDPERAHEFTFQQLRRITGTPFEALVRQKVPAKPVNCMGLTFKNPLGLAAGLDKDGECIDALGAMGFGSIEIGTVTPRPQPGNDKPRLFRLVDAEGLINRMGFNNLGVDNLVENVKKAHYDGVLGINIGKNKDTPVEQGKDDYLICMEKIYAYAGYIAINISSPNTPGLRTLQYGEALDDLLTAIKNKQNDLQAMHHKYVPIAVKIAPDLSEEELIQVADSLVRHNIDGVIATNTTLDRSLVQGMKNCDQTGGLSGRPLQLKSTEIIRRLSLELNGRLPIIGVGGIDSVIAAREKIAAGASLVQIYSGFIFKGPPLIKEIVTHI</sequence>
<comment type="function">
    <text evidence="1">Catalyzes the conversion of dihydroorotate to orotate with quinone as electron acceptor.</text>
</comment>
<comment type="catalytic activity">
    <reaction evidence="1">
        <text>(S)-dihydroorotate + a quinone = orotate + a quinol</text>
        <dbReference type="Rhea" id="RHEA:30187"/>
        <dbReference type="ChEBI" id="CHEBI:24646"/>
        <dbReference type="ChEBI" id="CHEBI:30839"/>
        <dbReference type="ChEBI" id="CHEBI:30864"/>
        <dbReference type="ChEBI" id="CHEBI:132124"/>
        <dbReference type="EC" id="1.3.5.2"/>
    </reaction>
</comment>
<comment type="cofactor">
    <cofactor evidence="1">
        <name>FMN</name>
        <dbReference type="ChEBI" id="CHEBI:58210"/>
    </cofactor>
    <text evidence="1">Binds 1 FMN per subunit.</text>
</comment>
<comment type="pathway">
    <text evidence="1">Pyrimidine metabolism; UMP biosynthesis via de novo pathway; orotate from (S)-dihydroorotate (quinone route): step 1/1.</text>
</comment>
<comment type="subunit">
    <text evidence="1">Monomer.</text>
</comment>
<comment type="subcellular location">
    <subcellularLocation>
        <location evidence="1">Cell membrane</location>
        <topology evidence="1">Peripheral membrane protein</topology>
    </subcellularLocation>
</comment>
<comment type="similarity">
    <text evidence="1">Belongs to the dihydroorotate dehydrogenase family. Type 2 subfamily.</text>
</comment>
<name>PYRD_ECO55</name>